<proteinExistence type="inferred from homology"/>
<comment type="catalytic activity">
    <reaction evidence="1">
        <text>alpha-D-glucose 6-phosphate = beta-D-fructose 6-phosphate</text>
        <dbReference type="Rhea" id="RHEA:11816"/>
        <dbReference type="ChEBI" id="CHEBI:57634"/>
        <dbReference type="ChEBI" id="CHEBI:58225"/>
        <dbReference type="EC" id="5.3.1.9"/>
    </reaction>
</comment>
<comment type="pathway">
    <text evidence="1">Carbohydrate degradation; glycolysis; D-glyceraldehyde 3-phosphate and glycerone phosphate from D-glucose: step 2/4.</text>
</comment>
<comment type="subunit">
    <text evidence="1">Homodimer.</text>
</comment>
<comment type="subcellular location">
    <subcellularLocation>
        <location evidence="1">Cytoplasm</location>
    </subcellularLocation>
</comment>
<comment type="similarity">
    <text evidence="1">Belongs to the archaeal-type GPI family.</text>
</comment>
<reference key="1">
    <citation type="journal article" date="2005" name="Genome Res.">
        <title>Complete genome sequence of the hyperthermophilic archaeon Thermococcus kodakaraensis KOD1 and comparison with Pyrococcus genomes.</title>
        <authorList>
            <person name="Fukui T."/>
            <person name="Atomi H."/>
            <person name="Kanai T."/>
            <person name="Matsumi R."/>
            <person name="Fujiwara S."/>
            <person name="Imanaka T."/>
        </authorList>
    </citation>
    <scope>NUCLEOTIDE SEQUENCE [LARGE SCALE GENOMIC DNA]</scope>
    <source>
        <strain>ATCC BAA-918 / JCM 12380 / KOD1</strain>
    </source>
</reference>
<organism>
    <name type="scientific">Thermococcus kodakarensis (strain ATCC BAA-918 / JCM 12380 / KOD1)</name>
    <name type="common">Pyrococcus kodakaraensis (strain KOD1)</name>
    <dbReference type="NCBI Taxonomy" id="69014"/>
    <lineage>
        <taxon>Archaea</taxon>
        <taxon>Methanobacteriati</taxon>
        <taxon>Methanobacteriota</taxon>
        <taxon>Thermococci</taxon>
        <taxon>Thermococcales</taxon>
        <taxon>Thermococcaceae</taxon>
        <taxon>Thermococcus</taxon>
    </lineage>
</organism>
<protein>
    <recommendedName>
        <fullName evidence="1">Glucose-6-phosphate isomerase</fullName>
        <shortName evidence="1">GPI</shortName>
        <ecNumber evidence="1">5.3.1.9</ecNumber>
    </recommendedName>
    <alternativeName>
        <fullName evidence="1">Phosphoglucose isomerase</fullName>
        <shortName evidence="1">PGI</shortName>
    </alternativeName>
    <alternativeName>
        <fullName evidence="1">Phosphohexose isomerase</fullName>
        <shortName evidence="1">PHI</shortName>
    </alternativeName>
</protein>
<name>GPI_THEKO</name>
<evidence type="ECO:0000255" key="1">
    <source>
        <dbReference type="HAMAP-Rule" id="MF_01410"/>
    </source>
</evidence>
<feature type="chain" id="PRO_0000185359" description="Glucose-6-phosphate isomerase">
    <location>
        <begin position="1"/>
        <end position="189"/>
    </location>
</feature>
<feature type="binding site" evidence="1">
    <location>
        <position position="88"/>
    </location>
    <ligand>
        <name>Fe cation</name>
        <dbReference type="ChEBI" id="CHEBI:24875"/>
    </ligand>
</feature>
<feature type="binding site" evidence="1">
    <location>
        <position position="90"/>
    </location>
    <ligand>
        <name>Fe cation</name>
        <dbReference type="ChEBI" id="CHEBI:24875"/>
    </ligand>
</feature>
<feature type="binding site" evidence="1">
    <location>
        <position position="97"/>
    </location>
    <ligand>
        <name>Fe cation</name>
        <dbReference type="ChEBI" id="CHEBI:24875"/>
    </ligand>
</feature>
<feature type="binding site" evidence="1">
    <location>
        <position position="136"/>
    </location>
    <ligand>
        <name>Fe cation</name>
        <dbReference type="ChEBI" id="CHEBI:24875"/>
    </ligand>
</feature>
<dbReference type="EC" id="5.3.1.9" evidence="1"/>
<dbReference type="EMBL" id="AP006878">
    <property type="protein sequence ID" value="BAD85300.1"/>
    <property type="molecule type" value="Genomic_DNA"/>
</dbReference>
<dbReference type="RefSeq" id="WP_011250062.1">
    <property type="nucleotide sequence ID" value="NC_006624.1"/>
</dbReference>
<dbReference type="SMR" id="Q5JE38"/>
<dbReference type="STRING" id="69014.TK1111"/>
<dbReference type="EnsemblBacteria" id="BAD85300">
    <property type="protein sequence ID" value="BAD85300"/>
    <property type="gene ID" value="TK1111"/>
</dbReference>
<dbReference type="GeneID" id="78447624"/>
<dbReference type="KEGG" id="tko:TK1111"/>
<dbReference type="PATRIC" id="fig|69014.16.peg.1087"/>
<dbReference type="eggNOG" id="arCOG02602">
    <property type="taxonomic scope" value="Archaea"/>
</dbReference>
<dbReference type="HOGENOM" id="CLU_105797_0_0_2"/>
<dbReference type="InParanoid" id="Q5JE38"/>
<dbReference type="OrthoDB" id="49661at2157"/>
<dbReference type="PhylomeDB" id="Q5JE38"/>
<dbReference type="BRENDA" id="5.3.1.9">
    <property type="organism ID" value="5246"/>
</dbReference>
<dbReference type="UniPathway" id="UPA00109">
    <property type="reaction ID" value="UER00181"/>
</dbReference>
<dbReference type="Proteomes" id="UP000000536">
    <property type="component" value="Chromosome"/>
</dbReference>
<dbReference type="GO" id="GO:0005737">
    <property type="term" value="C:cytoplasm"/>
    <property type="evidence" value="ECO:0007669"/>
    <property type="project" value="UniProtKB-SubCell"/>
</dbReference>
<dbReference type="GO" id="GO:0004347">
    <property type="term" value="F:glucose-6-phosphate isomerase activity"/>
    <property type="evidence" value="ECO:0007669"/>
    <property type="project" value="UniProtKB-UniRule"/>
</dbReference>
<dbReference type="GO" id="GO:0005506">
    <property type="term" value="F:iron ion binding"/>
    <property type="evidence" value="ECO:0007669"/>
    <property type="project" value="InterPro"/>
</dbReference>
<dbReference type="GO" id="GO:0006094">
    <property type="term" value="P:gluconeogenesis"/>
    <property type="evidence" value="ECO:0007669"/>
    <property type="project" value="UniProtKB-UniRule"/>
</dbReference>
<dbReference type="GO" id="GO:0006096">
    <property type="term" value="P:glycolytic process"/>
    <property type="evidence" value="ECO:0007669"/>
    <property type="project" value="UniProtKB-UniRule"/>
</dbReference>
<dbReference type="CDD" id="cd02218">
    <property type="entry name" value="cupin_PGI"/>
    <property type="match status" value="1"/>
</dbReference>
<dbReference type="Gene3D" id="2.60.120.10">
    <property type="entry name" value="Jelly Rolls"/>
    <property type="match status" value="1"/>
</dbReference>
<dbReference type="HAMAP" id="MF_01410">
    <property type="entry name" value="G6P_isomerase_arch"/>
    <property type="match status" value="1"/>
</dbReference>
<dbReference type="InterPro" id="IPR016758">
    <property type="entry name" value="G6P_isomerase_archaea/bacteria"/>
</dbReference>
<dbReference type="InterPro" id="IPR010551">
    <property type="entry name" value="G6P_isomerase_prok"/>
</dbReference>
<dbReference type="InterPro" id="IPR051610">
    <property type="entry name" value="GPI/OXD"/>
</dbReference>
<dbReference type="InterPro" id="IPR014710">
    <property type="entry name" value="RmlC-like_jellyroll"/>
</dbReference>
<dbReference type="InterPro" id="IPR011051">
    <property type="entry name" value="RmlC_Cupin_sf"/>
</dbReference>
<dbReference type="PANTHER" id="PTHR35848:SF6">
    <property type="entry name" value="CUPIN TYPE-2 DOMAIN-CONTAINING PROTEIN"/>
    <property type="match status" value="1"/>
</dbReference>
<dbReference type="PANTHER" id="PTHR35848">
    <property type="entry name" value="OXALATE-BINDING PROTEIN"/>
    <property type="match status" value="1"/>
</dbReference>
<dbReference type="Pfam" id="PF06560">
    <property type="entry name" value="GPI"/>
    <property type="match status" value="1"/>
</dbReference>
<dbReference type="PIRSF" id="PIRSF019325">
    <property type="entry name" value="Glucose-6-phosphate_isomerase"/>
    <property type="match status" value="1"/>
</dbReference>
<dbReference type="SUPFAM" id="SSF51182">
    <property type="entry name" value="RmlC-like cupins"/>
    <property type="match status" value="1"/>
</dbReference>
<gene>
    <name evidence="1" type="primary">pgiA</name>
    <name type="ordered locus">TK1111</name>
</gene>
<accession>Q5JE38</accession>
<sequence length="189" mass="21422">MEYKRPIGLDIDLETGVIPGAKKLVRRLSDLKGYFLDEEAYNELLKEDPVVYEVYAIEQEEKEGDLNFATTVLYPGKVGKEFFFTKGHFHAKPDRAEIYYGIKGKGGMLLQTPEGEAEWIPMGPGTVVYVPPYWAHRTVNTGNEPFIFLAIYPADAGHDYGSIKEKGFSKIVIEEDGEVKVVDNPRWKE</sequence>
<keyword id="KW-0963">Cytoplasm</keyword>
<keyword id="KW-0312">Gluconeogenesis</keyword>
<keyword id="KW-0324">Glycolysis</keyword>
<keyword id="KW-0408">Iron</keyword>
<keyword id="KW-0413">Isomerase</keyword>
<keyword id="KW-0479">Metal-binding</keyword>
<keyword id="KW-1185">Reference proteome</keyword>